<keyword id="KW-0028">Amino-acid biosynthesis</keyword>
<keyword id="KW-0055">Arginine biosynthesis</keyword>
<keyword id="KW-0067">ATP-binding</keyword>
<keyword id="KW-0963">Cytoplasm</keyword>
<keyword id="KW-0436">Ligase</keyword>
<keyword id="KW-0547">Nucleotide-binding</keyword>
<keyword id="KW-1185">Reference proteome</keyword>
<reference key="1">
    <citation type="journal article" date="2008" name="J. Bacteriol.">
        <title>Genome sequence of the chemolithoautotrophic bacterium Oligotropha carboxidovorans OM5T.</title>
        <authorList>
            <person name="Paul D."/>
            <person name="Bridges S."/>
            <person name="Burgess S.C."/>
            <person name="Dandass Y."/>
            <person name="Lawrence M.L."/>
        </authorList>
    </citation>
    <scope>NUCLEOTIDE SEQUENCE [LARGE SCALE GENOMIC DNA]</scope>
    <source>
        <strain>ATCC 49405 / DSM 1227 / KCTC 32145 / OM5</strain>
    </source>
</reference>
<reference key="2">
    <citation type="journal article" date="2011" name="J. Bacteriol.">
        <title>Complete genome sequences of the chemolithoautotrophic Oligotropha carboxidovorans strains OM4 and OM5.</title>
        <authorList>
            <person name="Volland S."/>
            <person name="Rachinger M."/>
            <person name="Strittmatter A."/>
            <person name="Daniel R."/>
            <person name="Gottschalk G."/>
            <person name="Meyer O."/>
        </authorList>
    </citation>
    <scope>NUCLEOTIDE SEQUENCE [LARGE SCALE GENOMIC DNA]</scope>
    <source>
        <strain>ATCC 49405 / DSM 1227 / KCTC 32145 / OM5</strain>
    </source>
</reference>
<organism>
    <name type="scientific">Afipia carboxidovorans (strain ATCC 49405 / DSM 1227 / KCTC 32145 / OM5)</name>
    <name type="common">Oligotropha carboxidovorans</name>
    <dbReference type="NCBI Taxonomy" id="504832"/>
    <lineage>
        <taxon>Bacteria</taxon>
        <taxon>Pseudomonadati</taxon>
        <taxon>Pseudomonadota</taxon>
        <taxon>Alphaproteobacteria</taxon>
        <taxon>Hyphomicrobiales</taxon>
        <taxon>Nitrobacteraceae</taxon>
        <taxon>Afipia</taxon>
    </lineage>
</organism>
<comment type="catalytic activity">
    <reaction evidence="1">
        <text>L-citrulline + L-aspartate + ATP = 2-(N(omega)-L-arginino)succinate + AMP + diphosphate + H(+)</text>
        <dbReference type="Rhea" id="RHEA:10932"/>
        <dbReference type="ChEBI" id="CHEBI:15378"/>
        <dbReference type="ChEBI" id="CHEBI:29991"/>
        <dbReference type="ChEBI" id="CHEBI:30616"/>
        <dbReference type="ChEBI" id="CHEBI:33019"/>
        <dbReference type="ChEBI" id="CHEBI:57472"/>
        <dbReference type="ChEBI" id="CHEBI:57743"/>
        <dbReference type="ChEBI" id="CHEBI:456215"/>
        <dbReference type="EC" id="6.3.4.5"/>
    </reaction>
</comment>
<comment type="pathway">
    <text evidence="1">Amino-acid biosynthesis; L-arginine biosynthesis; L-arginine from L-ornithine and carbamoyl phosphate: step 2/3.</text>
</comment>
<comment type="subunit">
    <text evidence="1">Homotetramer.</text>
</comment>
<comment type="subcellular location">
    <subcellularLocation>
        <location evidence="1">Cytoplasm</location>
    </subcellularLocation>
</comment>
<comment type="similarity">
    <text evidence="1">Belongs to the argininosuccinate synthase family. Type 2 subfamily.</text>
</comment>
<protein>
    <recommendedName>
        <fullName evidence="1">Argininosuccinate synthase</fullName>
        <ecNumber evidence="1">6.3.4.5</ecNumber>
    </recommendedName>
    <alternativeName>
        <fullName evidence="1">Citrulline--aspartate ligase</fullName>
    </alternativeName>
</protein>
<accession>B6JAT0</accession>
<accession>F8BSS9</accession>
<proteinExistence type="inferred from homology"/>
<evidence type="ECO:0000255" key="1">
    <source>
        <dbReference type="HAMAP-Rule" id="MF_00581"/>
    </source>
</evidence>
<feature type="chain" id="PRO_1000129758" description="Argininosuccinate synthase">
    <location>
        <begin position="1"/>
        <end position="445"/>
    </location>
</feature>
<feature type="binding site" evidence="1">
    <location>
        <begin position="17"/>
        <end position="25"/>
    </location>
    <ligand>
        <name>ATP</name>
        <dbReference type="ChEBI" id="CHEBI:30616"/>
    </ligand>
</feature>
<feature type="binding site" evidence="1">
    <location>
        <position position="43"/>
    </location>
    <ligand>
        <name>ATP</name>
        <dbReference type="ChEBI" id="CHEBI:30616"/>
    </ligand>
</feature>
<feature type="binding site" evidence="1">
    <location>
        <position position="99"/>
    </location>
    <ligand>
        <name>L-citrulline</name>
        <dbReference type="ChEBI" id="CHEBI:57743"/>
    </ligand>
</feature>
<feature type="binding site" evidence="1">
    <location>
        <position position="129"/>
    </location>
    <ligand>
        <name>ATP</name>
        <dbReference type="ChEBI" id="CHEBI:30616"/>
    </ligand>
</feature>
<feature type="binding site" evidence="1">
    <location>
        <position position="131"/>
    </location>
    <ligand>
        <name>ATP</name>
        <dbReference type="ChEBI" id="CHEBI:30616"/>
    </ligand>
</feature>
<feature type="binding site" evidence="1">
    <location>
        <position position="131"/>
    </location>
    <ligand>
        <name>L-aspartate</name>
        <dbReference type="ChEBI" id="CHEBI:29991"/>
    </ligand>
</feature>
<feature type="binding site" evidence="1">
    <location>
        <position position="135"/>
    </location>
    <ligand>
        <name>L-aspartate</name>
        <dbReference type="ChEBI" id="CHEBI:29991"/>
    </ligand>
</feature>
<feature type="binding site" evidence="1">
    <location>
        <position position="135"/>
    </location>
    <ligand>
        <name>L-citrulline</name>
        <dbReference type="ChEBI" id="CHEBI:57743"/>
    </ligand>
</feature>
<feature type="binding site" evidence="1">
    <location>
        <position position="136"/>
    </location>
    <ligand>
        <name>ATP</name>
        <dbReference type="ChEBI" id="CHEBI:30616"/>
    </ligand>
</feature>
<feature type="binding site" evidence="1">
    <location>
        <position position="136"/>
    </location>
    <ligand>
        <name>L-aspartate</name>
        <dbReference type="ChEBI" id="CHEBI:29991"/>
    </ligand>
</feature>
<feature type="binding site" evidence="1">
    <location>
        <position position="139"/>
    </location>
    <ligand>
        <name>L-citrulline</name>
        <dbReference type="ChEBI" id="CHEBI:57743"/>
    </ligand>
</feature>
<feature type="binding site" evidence="1">
    <location>
        <position position="192"/>
    </location>
    <ligand>
        <name>L-citrulline</name>
        <dbReference type="ChEBI" id="CHEBI:57743"/>
    </ligand>
</feature>
<feature type="binding site" evidence="1">
    <location>
        <position position="194"/>
    </location>
    <ligand>
        <name>ATP</name>
        <dbReference type="ChEBI" id="CHEBI:30616"/>
    </ligand>
</feature>
<feature type="binding site" evidence="1">
    <location>
        <position position="201"/>
    </location>
    <ligand>
        <name>L-citrulline</name>
        <dbReference type="ChEBI" id="CHEBI:57743"/>
    </ligand>
</feature>
<feature type="binding site" evidence="1">
    <location>
        <position position="203"/>
    </location>
    <ligand>
        <name>L-citrulline</name>
        <dbReference type="ChEBI" id="CHEBI:57743"/>
    </ligand>
</feature>
<feature type="binding site" evidence="1">
    <location>
        <position position="280"/>
    </location>
    <ligand>
        <name>L-citrulline</name>
        <dbReference type="ChEBI" id="CHEBI:57743"/>
    </ligand>
</feature>
<dbReference type="EC" id="6.3.4.5" evidence="1"/>
<dbReference type="EMBL" id="CP001196">
    <property type="protein sequence ID" value="ACI91443.1"/>
    <property type="molecule type" value="Genomic_DNA"/>
</dbReference>
<dbReference type="EMBL" id="CP002826">
    <property type="protein sequence ID" value="AEI04956.1"/>
    <property type="molecule type" value="Genomic_DNA"/>
</dbReference>
<dbReference type="RefSeq" id="WP_012561474.1">
    <property type="nucleotide sequence ID" value="NC_015684.1"/>
</dbReference>
<dbReference type="SMR" id="B6JAT0"/>
<dbReference type="STRING" id="504832.OCA5_c02270"/>
<dbReference type="KEGG" id="oca:OCAR_4294"/>
<dbReference type="KEGG" id="ocg:OCA5_c02270"/>
<dbReference type="PATRIC" id="fig|504832.7.peg.240"/>
<dbReference type="eggNOG" id="COG0137">
    <property type="taxonomic scope" value="Bacteria"/>
</dbReference>
<dbReference type="HOGENOM" id="CLU_032784_4_1_5"/>
<dbReference type="OrthoDB" id="9801641at2"/>
<dbReference type="UniPathway" id="UPA00068">
    <property type="reaction ID" value="UER00113"/>
</dbReference>
<dbReference type="Proteomes" id="UP000007730">
    <property type="component" value="Chromosome"/>
</dbReference>
<dbReference type="GO" id="GO:0005737">
    <property type="term" value="C:cytoplasm"/>
    <property type="evidence" value="ECO:0007669"/>
    <property type="project" value="UniProtKB-SubCell"/>
</dbReference>
<dbReference type="GO" id="GO:0004055">
    <property type="term" value="F:argininosuccinate synthase activity"/>
    <property type="evidence" value="ECO:0007669"/>
    <property type="project" value="UniProtKB-UniRule"/>
</dbReference>
<dbReference type="GO" id="GO:0005524">
    <property type="term" value="F:ATP binding"/>
    <property type="evidence" value="ECO:0007669"/>
    <property type="project" value="UniProtKB-UniRule"/>
</dbReference>
<dbReference type="GO" id="GO:0042803">
    <property type="term" value="F:protein homodimerization activity"/>
    <property type="evidence" value="ECO:0007669"/>
    <property type="project" value="InterPro"/>
</dbReference>
<dbReference type="GO" id="GO:0000053">
    <property type="term" value="P:argininosuccinate metabolic process"/>
    <property type="evidence" value="ECO:0007669"/>
    <property type="project" value="TreeGrafter"/>
</dbReference>
<dbReference type="GO" id="GO:0006526">
    <property type="term" value="P:L-arginine biosynthetic process"/>
    <property type="evidence" value="ECO:0007669"/>
    <property type="project" value="UniProtKB-UniRule"/>
</dbReference>
<dbReference type="GO" id="GO:0000050">
    <property type="term" value="P:urea cycle"/>
    <property type="evidence" value="ECO:0007669"/>
    <property type="project" value="TreeGrafter"/>
</dbReference>
<dbReference type="CDD" id="cd01999">
    <property type="entry name" value="ASS"/>
    <property type="match status" value="1"/>
</dbReference>
<dbReference type="FunFam" id="1.10.287.400:FF:000001">
    <property type="entry name" value="Argininosuccinate synthase"/>
    <property type="match status" value="1"/>
</dbReference>
<dbReference type="Gene3D" id="1.10.287.400">
    <property type="match status" value="1"/>
</dbReference>
<dbReference type="Gene3D" id="3.90.1260.10">
    <property type="entry name" value="Argininosuccinate synthetase, chain A, domain 2"/>
    <property type="match status" value="1"/>
</dbReference>
<dbReference type="Gene3D" id="3.40.50.620">
    <property type="entry name" value="HUPs"/>
    <property type="match status" value="1"/>
</dbReference>
<dbReference type="HAMAP" id="MF_00581">
    <property type="entry name" value="Arg_succ_synth_type2"/>
    <property type="match status" value="1"/>
</dbReference>
<dbReference type="InterPro" id="IPR023437">
    <property type="entry name" value="Arg_succ_synth_type2_subfam"/>
</dbReference>
<dbReference type="InterPro" id="IPR048268">
    <property type="entry name" value="Arginosuc_syn_C"/>
</dbReference>
<dbReference type="InterPro" id="IPR048267">
    <property type="entry name" value="Arginosuc_syn_N"/>
</dbReference>
<dbReference type="InterPro" id="IPR001518">
    <property type="entry name" value="Arginosuc_synth"/>
</dbReference>
<dbReference type="InterPro" id="IPR018223">
    <property type="entry name" value="Arginosuc_synth_CS"/>
</dbReference>
<dbReference type="InterPro" id="IPR023434">
    <property type="entry name" value="Arginosuc_synth_type_1_subfam"/>
</dbReference>
<dbReference type="InterPro" id="IPR024074">
    <property type="entry name" value="AS_cat/multimer_dom_body"/>
</dbReference>
<dbReference type="InterPro" id="IPR024073">
    <property type="entry name" value="AS_multimer_C_tail"/>
</dbReference>
<dbReference type="InterPro" id="IPR014729">
    <property type="entry name" value="Rossmann-like_a/b/a_fold"/>
</dbReference>
<dbReference type="NCBIfam" id="TIGR00032">
    <property type="entry name" value="argG"/>
    <property type="match status" value="1"/>
</dbReference>
<dbReference type="NCBIfam" id="NF003779">
    <property type="entry name" value="PRK05370.1"/>
    <property type="match status" value="1"/>
</dbReference>
<dbReference type="PANTHER" id="PTHR11587">
    <property type="entry name" value="ARGININOSUCCINATE SYNTHASE"/>
    <property type="match status" value="1"/>
</dbReference>
<dbReference type="PANTHER" id="PTHR11587:SF2">
    <property type="entry name" value="ARGININOSUCCINATE SYNTHASE"/>
    <property type="match status" value="1"/>
</dbReference>
<dbReference type="Pfam" id="PF20979">
    <property type="entry name" value="Arginosuc_syn_C"/>
    <property type="match status" value="1"/>
</dbReference>
<dbReference type="Pfam" id="PF00764">
    <property type="entry name" value="Arginosuc_synth"/>
    <property type="match status" value="1"/>
</dbReference>
<dbReference type="SUPFAM" id="SSF52402">
    <property type="entry name" value="Adenine nucleotide alpha hydrolases-like"/>
    <property type="match status" value="1"/>
</dbReference>
<dbReference type="SUPFAM" id="SSF69864">
    <property type="entry name" value="Argininosuccinate synthetase, C-terminal domain"/>
    <property type="match status" value="1"/>
</dbReference>
<dbReference type="PROSITE" id="PS00564">
    <property type="entry name" value="ARGININOSUCCIN_SYN_1"/>
    <property type="match status" value="1"/>
</dbReference>
<dbReference type="PROSITE" id="PS00565">
    <property type="entry name" value="ARGININOSUCCIN_SYN_2"/>
    <property type="match status" value="1"/>
</dbReference>
<gene>
    <name evidence="1" type="primary">argG</name>
    <name type="ordered locus">OCAR_4294</name>
    <name type="ordered locus">OCA5_c02270</name>
</gene>
<sequence>MSTILKSLPKGENVGIAFSGGLDTSAALLWMKQKGARVFAYTANLGQPDEADYDEIPRKALEFGAEKARLVDCRTQLVHEGIAAIQSGAFHVSTGGIAYFNTTPLGRAVTGTMLVSAMKEDGVNIWGDGSTYKGNDIERFYRYGLLTNPELRIYKPWLDQQFIDELGGRAEMSAFMTAHGFAYKMSAEKAYSTDSNILGATHEAKDLEHLDSGIKIVNPIMGVPFWRDDCAVKAEKVSVRFEEGQPVALNGQTFTDPVALFLEANTIGGRHGLGMSDQIENRIIEAKSRGIYEAPAMALLHIAYERLVTGIHNEDTIEQYRISGMRLGRLLYQGRWFDSQALMLRETAQRWVARAITGEVTLELRRGNDYSILNTESPNLTYAPERLSMEKVEDAAFTPGDRIGQLTMRNLDISDTRRKLNLYTQTGLLSAEQGSHIPRLDNDKS</sequence>
<name>ASSY_AFIC5</name>